<feature type="signal peptide" evidence="2">
    <location>
        <begin position="1"/>
        <end position="19"/>
    </location>
</feature>
<feature type="propeptide" id="PRO_0000436793" evidence="4 5">
    <location>
        <begin position="20"/>
        <end position="50"/>
    </location>
</feature>
<feature type="chain" id="PRO_0000058042" description="Minor fimbrium subunit Mfa1">
    <location>
        <begin position="51"/>
        <end position="498"/>
    </location>
</feature>
<feature type="region of interest" description="Disordered" evidence="3">
    <location>
        <begin position="436"/>
        <end position="476"/>
    </location>
</feature>
<feature type="site" description="Cleavage; by gingipain" evidence="1">
    <location>
        <begin position="50"/>
        <end position="51"/>
    </location>
</feature>
<feature type="lipid moiety-binding region" description="N-palmitoyl cysteine" evidence="2">
    <location>
        <position position="20"/>
    </location>
</feature>
<feature type="lipid moiety-binding region" description="S-diacylglycerol cysteine" evidence="2">
    <location>
        <position position="20"/>
    </location>
</feature>
<reference evidence="8" key="1">
    <citation type="journal article" date="1997" name="Microbios">
        <title>Molecular cloning and characterization of the gene encoding 53 kD outer membrane protein of Porphyromonas gingivalis.</title>
        <authorList>
            <person name="Hongyo H."/>
            <person name="Kurihara H."/>
            <person name="Kokeguchi S."/>
            <person name="Miyamoto M."/>
            <person name="Maeda H."/>
            <person name="Hayakawa M."/>
            <person name="Abiko Y."/>
            <person name="Takashiba S."/>
            <person name="Murayama Y."/>
        </authorList>
    </citation>
    <scope>NUCLEOTIDE SEQUENCE [GENOMIC DNA]</scope>
    <source>
        <strain evidence="8">ATCC BAA-1703 / FDC 381</strain>
    </source>
</reference>
<reference key="2">
    <citation type="submission" date="1998-05" db="UniProtKB">
        <authorList>
            <person name="Sojar H.T."/>
            <person name="Genco R.J."/>
        </authorList>
    </citation>
    <scope>PROTEIN SEQUENCE OF 51-75</scope>
    <source>
        <strain>A7A-28</strain>
    </source>
</reference>
<reference key="3">
    <citation type="journal article" date="1994" name="Microbios">
        <title>Biochemical properties of the major outer membrane proteins of Porphyromonas gingivalis.</title>
        <authorList>
            <person name="Kokeguchi S."/>
            <person name="Miyamoto M."/>
            <person name="Ohyama H."/>
            <person name="Hongyo H."/>
            <person name="Takigawa M."/>
            <person name="Kurihara H."/>
            <person name="Murayama Y."/>
            <person name="Kato K."/>
        </authorList>
    </citation>
    <scope>PROTEIN SEQUENCE OF 51-71</scope>
    <scope>SUBCELLULAR LOCATION</scope>
    <source>
        <strain>ATCC BAA-1703 / FDC 381</strain>
    </source>
</reference>
<reference key="4">
    <citation type="journal article" date="2015" name="J. Dent. Res.">
        <title>A major fimbrilin variant of Mfa1 fimbriae in Porphyromonas gingivalis.</title>
        <authorList>
            <person name="Nagano K."/>
            <person name="Hasegawa Y."/>
            <person name="Yoshida Y."/>
            <person name="Yoshimura F."/>
        </authorList>
    </citation>
    <scope>IDENTIFICATION</scope>
    <source>
        <strain>ATCC BAA-1703 / FDC 381</strain>
    </source>
</reference>
<dbReference type="EMBL" id="D31835">
    <property type="protein sequence ID" value="BAA84008.1"/>
    <property type="molecule type" value="Genomic_DNA"/>
</dbReference>
<dbReference type="SMR" id="P81363"/>
<dbReference type="GO" id="GO:0009279">
    <property type="term" value="C:cell outer membrane"/>
    <property type="evidence" value="ECO:0007669"/>
    <property type="project" value="UniProtKB-SubCell"/>
</dbReference>
<dbReference type="GO" id="GO:0019867">
    <property type="term" value="C:outer membrane"/>
    <property type="evidence" value="ECO:0000250"/>
    <property type="project" value="UniProtKB"/>
</dbReference>
<dbReference type="GO" id="GO:0009418">
    <property type="term" value="C:pilus shaft"/>
    <property type="evidence" value="ECO:0000250"/>
    <property type="project" value="UniProtKB"/>
</dbReference>
<dbReference type="GO" id="GO:0098609">
    <property type="term" value="P:cell-cell adhesion"/>
    <property type="evidence" value="ECO:0000250"/>
    <property type="project" value="UniProtKB"/>
</dbReference>
<dbReference type="Gene3D" id="2.60.40.2580">
    <property type="match status" value="1"/>
</dbReference>
<dbReference type="Gene3D" id="2.60.40.3690">
    <property type="match status" value="1"/>
</dbReference>
<dbReference type="InterPro" id="IPR029140">
    <property type="entry name" value="Mfa1_C"/>
</dbReference>
<dbReference type="InterPro" id="IPR047786">
    <property type="entry name" value="Mfa1_fim"/>
</dbReference>
<dbReference type="NCBIfam" id="NF038041">
    <property type="entry name" value="fim_Mfa1_fam"/>
    <property type="match status" value="1"/>
</dbReference>
<dbReference type="Pfam" id="PF15495">
    <property type="entry name" value="Fimbrillin_C"/>
    <property type="match status" value="1"/>
</dbReference>
<dbReference type="PROSITE" id="PS51257">
    <property type="entry name" value="PROKAR_LIPOPROTEIN"/>
    <property type="match status" value="1"/>
</dbReference>
<proteinExistence type="evidence at protein level"/>
<keyword id="KW-0998">Cell outer membrane</keyword>
<keyword id="KW-0903">Direct protein sequencing</keyword>
<keyword id="KW-0281">Fimbrium</keyword>
<keyword id="KW-0449">Lipoprotein</keyword>
<keyword id="KW-0472">Membrane</keyword>
<keyword id="KW-0564">Palmitate</keyword>
<keyword id="KW-0732">Signal</keyword>
<keyword id="KW-0843">Virulence</keyword>
<organism>
    <name type="scientific">Porphyromonas gingivalis</name>
    <name type="common">Bacteroides gingivalis</name>
    <dbReference type="NCBI Taxonomy" id="837"/>
    <lineage>
        <taxon>Bacteria</taxon>
        <taxon>Pseudomonadati</taxon>
        <taxon>Bacteroidota</taxon>
        <taxon>Bacteroidia</taxon>
        <taxon>Bacteroidales</taxon>
        <taxon>Porphyromonadaceae</taxon>
        <taxon>Porphyromonas</taxon>
    </lineage>
</organism>
<name>MFA53_PORGN</name>
<evidence type="ECO:0000250" key="1">
    <source>
        <dbReference type="UniProtKB" id="B2RHG1"/>
    </source>
</evidence>
<evidence type="ECO:0000255" key="2">
    <source>
        <dbReference type="PROSITE-ProRule" id="PRU00303"/>
    </source>
</evidence>
<evidence type="ECO:0000256" key="3">
    <source>
        <dbReference type="SAM" id="MobiDB-lite"/>
    </source>
</evidence>
<evidence type="ECO:0000269" key="4">
    <source>
    </source>
</evidence>
<evidence type="ECO:0000269" key="5">
    <source ref="2"/>
</evidence>
<evidence type="ECO:0000305" key="6"/>
<evidence type="ECO:0000305" key="7">
    <source>
    </source>
</evidence>
<evidence type="ECO:0000312" key="8">
    <source>
        <dbReference type="EMBL" id="BAA84008.1"/>
    </source>
</evidence>
<comment type="function">
    <text evidence="1">Structural subunit of the minor fimbriae. These filamentous pili are attached to the cell surface; they mediate biofilm formation, adhesion onto host cells and onto other bacteria that are part of the oral microbiome. They play an important role in invasion of periodontal tissues and are recognized as major virulence factors. Mfa1 orthologs from different strains have highly divergent sequences, and this correlates with pathogenicity.</text>
</comment>
<comment type="subunit">
    <text evidence="1">Structural component of the fimbrial stalk. Minor fimbriae are composed of a structural subunit, most often Mfa1, and the accessory subunits Mfa3, Mfa4 and Mfa5. Mfa1 interacts with Mfa2; this anchors the fimbrium in the membrane. Fimbrium assembly occurs by linear, head-to-tail oligomerization of fimbrial subunits. This is mediated via insertion of a C-terminal beta-strand from one subunit into a groove in the N-terminal domain of the following subunit.</text>
</comment>
<comment type="subcellular location">
    <subcellularLocation>
        <location evidence="1">Fimbrium</location>
    </subcellularLocation>
    <subcellularLocation>
        <location evidence="4">Cell outer membrane</location>
    </subcellularLocation>
    <text evidence="7">Probably synthesized as a palmitoylated precursor. Efficient export to the outer membrane and integration into fimbriae requires lipidation and subsequent proteolytic removal of the lipidated propeptide.</text>
</comment>
<comment type="similarity">
    <text evidence="6">Belongs to the bacteroidetes fimbrillin superfamily. FimA/Mfa1 family.</text>
</comment>
<accession>P81363</accession>
<accession>Q9RM67</accession>
<protein>
    <recommendedName>
        <fullName evidence="6">Minor fimbrium subunit Mfa1</fullName>
    </recommendedName>
    <alternativeName>
        <fullName>53 kDa major outer membrane protein</fullName>
    </alternativeName>
</protein>
<sequence>MKLNKMFLVGALLSLGFASCSKEGNGPAPDSSSTADTHMSVSMSLPQHNRAGDNDYNPIGEYGGVDKINDLTVYVVGDGKIDVRKLSTADLQVNQGASTTSIVTAPFQVKSGEKTVYAIVNITPKVEAALNAATNAADLKVAYEAAYAAFSDAGSEIATLVNNQDQMIMSGKPVVQTILANVSAANASVQNKVPIIVKRAAIRASMTITQQPVNGAYEIKALRPGNVEVGIATVSDLKWAVAQYEKKYYLQQKDNALSPAASFVPASTNDYNGANGAMKHYDYSQLANRITVHQLNAPYSVTDVPNVAYKYVSETTHADNDYRKGNTTYILVKGKLKPVAAMWADGEQAAYQEGGDLFLGLVTGKFYANEANANAANPASGGAGNPRVVTYKAAAVYYYAWLNPNTLDPTTWTMSPARRNNIYNVNISKFRNIGLSGNPFVPTDPDPNNPDTPDNPDTPDPEDPDTPNPEEPLPVQKTYMVVDVTVTPWTLHNYDIEF</sequence>
<gene>
    <name evidence="6" type="primary">mfa1</name>
</gene>